<keyword id="KW-0130">Cell adhesion</keyword>
<keyword id="KW-1015">Disulfide bond</keyword>
<keyword id="KW-0272">Extracellular matrix</keyword>
<keyword id="KW-1267">Proteomics identification</keyword>
<keyword id="KW-0873">Pyrrolidone carboxylic acid</keyword>
<keyword id="KW-1185">Reference proteome</keyword>
<keyword id="KW-0677">Repeat</keyword>
<keyword id="KW-0964">Secreted</keyword>
<keyword id="KW-0732">Signal</keyword>
<keyword id="KW-0765">Sulfation</keyword>
<comment type="function">
    <text evidence="1">Seems to mediate adhesion by cell surface integrin binding. May serve as a communication link between the dermal fibroblast cell surface and its extracellular matrix environment. Enhances TGFB1 activity. Inhibits cell proliferation. Accelerates collagen fibril formation, and stabilizes collagen fibrils against low-temperature dissociation (By similarity).</text>
</comment>
<comment type="subunit">
    <text evidence="1">Interacts with TGFB1, DCN and collagen.</text>
</comment>
<comment type="interaction">
    <interactant intactId="EBI-719535">
        <id>Q07507</id>
    </interactant>
    <interactant intactId="EBI-20724846">
        <id>PRO_0000018520</id>
        <label>LOX</label>
        <dbReference type="UniProtKB" id="P28300"/>
    </interactant>
    <organismsDiffer>false</organismsDiffer>
    <experiments>2</experiments>
</comment>
<comment type="subcellular location">
    <subcellularLocation>
        <location evidence="1">Secreted</location>
        <location evidence="1">Extracellular space</location>
        <location evidence="1">Extracellular matrix</location>
    </subcellularLocation>
</comment>
<comment type="tissue specificity">
    <text evidence="4 5">Expressed in fibroblasts, heart, skeletal muscle, brain and pancreas. Expressed at an intermediate level in lung and kidney, and at a low level in liver and placenta. Expressed at a lower level in fibroblasts from hypertrophic scar lesional skin and in fibroblasts from patients with systemic sclerosis than in normal skin fibroblasts.</text>
</comment>
<comment type="induction">
    <text evidence="4">Induced by TGFB1, repressed by IL4/interleukin-4.</text>
</comment>
<comment type="PTM">
    <text evidence="1">Sulfated on tyrosine residue(s).</text>
</comment>
<comment type="similarity">
    <text evidence="6">Belongs to the dermatopontin family.</text>
</comment>
<gene>
    <name type="primary">DPT</name>
</gene>
<dbReference type="EMBL" id="Z22865">
    <property type="protein sequence ID" value="CAA80487.1"/>
    <property type="molecule type" value="mRNA"/>
</dbReference>
<dbReference type="EMBL" id="AK292596">
    <property type="protein sequence ID" value="BAF85285.1"/>
    <property type="molecule type" value="mRNA"/>
</dbReference>
<dbReference type="EMBL" id="AL049798">
    <property type="status" value="NOT_ANNOTATED_CDS"/>
    <property type="molecule type" value="Genomic_DNA"/>
</dbReference>
<dbReference type="EMBL" id="CH471067">
    <property type="protein sequence ID" value="EAW90830.1"/>
    <property type="molecule type" value="Genomic_DNA"/>
</dbReference>
<dbReference type="EMBL" id="BC033736">
    <property type="protein sequence ID" value="AAH33736.1"/>
    <property type="molecule type" value="mRNA"/>
</dbReference>
<dbReference type="CCDS" id="CCDS1275.1"/>
<dbReference type="PIR" id="A47220">
    <property type="entry name" value="A47220"/>
</dbReference>
<dbReference type="RefSeq" id="NP_001928.2">
    <property type="nucleotide sequence ID" value="NM_001937.4"/>
</dbReference>
<dbReference type="BioGRID" id="108139">
    <property type="interactions" value="2"/>
</dbReference>
<dbReference type="FunCoup" id="Q07507">
    <property type="interactions" value="81"/>
</dbReference>
<dbReference type="IntAct" id="Q07507">
    <property type="interactions" value="4"/>
</dbReference>
<dbReference type="STRING" id="9606.ENSP00000356791"/>
<dbReference type="GlyGen" id="Q07507">
    <property type="glycosylation" value="1 site, 1 O-linked glycan (1 site)"/>
</dbReference>
<dbReference type="iPTMnet" id="Q07507"/>
<dbReference type="PhosphoSitePlus" id="Q07507"/>
<dbReference type="BioMuta" id="DPT"/>
<dbReference type="MassIVE" id="Q07507"/>
<dbReference type="PaxDb" id="9606-ENSP00000356791"/>
<dbReference type="PeptideAtlas" id="Q07507"/>
<dbReference type="ProteomicsDB" id="58518"/>
<dbReference type="Antibodypedia" id="34354">
    <property type="antibodies" value="158 antibodies from 29 providers"/>
</dbReference>
<dbReference type="DNASU" id="1805"/>
<dbReference type="Ensembl" id="ENST00000367817.4">
    <property type="protein sequence ID" value="ENSP00000356791.3"/>
    <property type="gene ID" value="ENSG00000143196.5"/>
</dbReference>
<dbReference type="GeneID" id="1805"/>
<dbReference type="KEGG" id="hsa:1805"/>
<dbReference type="MANE-Select" id="ENST00000367817.4">
    <property type="protein sequence ID" value="ENSP00000356791.3"/>
    <property type="RefSeq nucleotide sequence ID" value="NM_001937.5"/>
    <property type="RefSeq protein sequence ID" value="NP_001928.2"/>
</dbReference>
<dbReference type="UCSC" id="uc001gfp.4">
    <property type="organism name" value="human"/>
</dbReference>
<dbReference type="AGR" id="HGNC:3011"/>
<dbReference type="CTD" id="1805"/>
<dbReference type="DisGeNET" id="1805"/>
<dbReference type="GeneCards" id="DPT"/>
<dbReference type="HGNC" id="HGNC:3011">
    <property type="gene designation" value="DPT"/>
</dbReference>
<dbReference type="HPA" id="ENSG00000143196">
    <property type="expression patterns" value="Tissue enhanced (intestine)"/>
</dbReference>
<dbReference type="MIM" id="125597">
    <property type="type" value="gene"/>
</dbReference>
<dbReference type="neXtProt" id="NX_Q07507"/>
<dbReference type="OpenTargets" id="ENSG00000143196"/>
<dbReference type="PharmGKB" id="PA27471"/>
<dbReference type="VEuPathDB" id="HostDB:ENSG00000143196"/>
<dbReference type="eggNOG" id="ENOG502RTKC">
    <property type="taxonomic scope" value="Eukaryota"/>
</dbReference>
<dbReference type="GeneTree" id="ENSGT00390000010760"/>
<dbReference type="HOGENOM" id="CLU_122082_1_0_1"/>
<dbReference type="InParanoid" id="Q07507"/>
<dbReference type="OMA" id="RAGMEWS"/>
<dbReference type="OrthoDB" id="8545119at2759"/>
<dbReference type="PAN-GO" id="Q07507">
    <property type="GO annotations" value="1 GO annotation based on evolutionary models"/>
</dbReference>
<dbReference type="PhylomeDB" id="Q07507"/>
<dbReference type="TreeFam" id="TF328602"/>
<dbReference type="PathwayCommons" id="Q07507"/>
<dbReference type="SignaLink" id="Q07507"/>
<dbReference type="BioGRID-ORCS" id="1805">
    <property type="hits" value="10 hits in 1143 CRISPR screens"/>
</dbReference>
<dbReference type="ChiTaRS" id="DPT">
    <property type="organism name" value="human"/>
</dbReference>
<dbReference type="GeneWiki" id="Dermatopontin"/>
<dbReference type="GenomeRNAi" id="1805"/>
<dbReference type="Pharos" id="Q07507">
    <property type="development level" value="Tbio"/>
</dbReference>
<dbReference type="PRO" id="PR:Q07507"/>
<dbReference type="Proteomes" id="UP000005640">
    <property type="component" value="Chromosome 1"/>
</dbReference>
<dbReference type="RNAct" id="Q07507">
    <property type="molecule type" value="protein"/>
</dbReference>
<dbReference type="Bgee" id="ENSG00000143196">
    <property type="expression patterns" value="Expressed in smooth muscle tissue and 91 other cell types or tissues"/>
</dbReference>
<dbReference type="GO" id="GO:0062023">
    <property type="term" value="C:collagen-containing extracellular matrix"/>
    <property type="evidence" value="ECO:0007005"/>
    <property type="project" value="BHF-UCL"/>
</dbReference>
<dbReference type="GO" id="GO:0005615">
    <property type="term" value="C:extracellular space"/>
    <property type="evidence" value="ECO:0007005"/>
    <property type="project" value="BHF-UCL"/>
</dbReference>
<dbReference type="GO" id="GO:0005201">
    <property type="term" value="F:extracellular matrix structural constituent"/>
    <property type="evidence" value="ECO:0000250"/>
    <property type="project" value="BHF-UCL"/>
</dbReference>
<dbReference type="GO" id="GO:0007155">
    <property type="term" value="P:cell adhesion"/>
    <property type="evidence" value="ECO:0007669"/>
    <property type="project" value="UniProtKB-KW"/>
</dbReference>
<dbReference type="GO" id="GO:0030199">
    <property type="term" value="P:collagen fibril organization"/>
    <property type="evidence" value="ECO:0000318"/>
    <property type="project" value="GO_Central"/>
</dbReference>
<dbReference type="GO" id="GO:0008285">
    <property type="term" value="P:negative regulation of cell population proliferation"/>
    <property type="evidence" value="ECO:0007669"/>
    <property type="project" value="Ensembl"/>
</dbReference>
<dbReference type="InterPro" id="IPR026645">
    <property type="entry name" value="Dermatopontin"/>
</dbReference>
<dbReference type="PANTHER" id="PTHR15040:SF2">
    <property type="entry name" value="DERMATOPONTIN"/>
    <property type="match status" value="1"/>
</dbReference>
<dbReference type="PANTHER" id="PTHR15040">
    <property type="entry name" value="DERMATOPONTIN-RELATED"/>
    <property type="match status" value="1"/>
</dbReference>
<dbReference type="Pfam" id="PF14704">
    <property type="entry name" value="DERM"/>
    <property type="match status" value="1"/>
</dbReference>
<reference key="1">
    <citation type="journal article" date="1993" name="Genomics">
        <title>Complementary DNA sequence and chromosomal mapping of a human proteoglycan-binding cell-adhesion protein (dermatopontin).</title>
        <authorList>
            <person name="Superti-Furga A."/>
            <person name="Rocchi M."/>
            <person name="Schaefer B.W."/>
            <person name="Gitzelmann R."/>
        </authorList>
    </citation>
    <scope>NUCLEOTIDE SEQUENCE [MRNA]</scope>
    <scope>TISSUE SPECIFICITY</scope>
</reference>
<reference key="2">
    <citation type="journal article" date="2004" name="Nat. Genet.">
        <title>Complete sequencing and characterization of 21,243 full-length human cDNAs.</title>
        <authorList>
            <person name="Ota T."/>
            <person name="Suzuki Y."/>
            <person name="Nishikawa T."/>
            <person name="Otsuki T."/>
            <person name="Sugiyama T."/>
            <person name="Irie R."/>
            <person name="Wakamatsu A."/>
            <person name="Hayashi K."/>
            <person name="Sato H."/>
            <person name="Nagai K."/>
            <person name="Kimura K."/>
            <person name="Makita H."/>
            <person name="Sekine M."/>
            <person name="Obayashi M."/>
            <person name="Nishi T."/>
            <person name="Shibahara T."/>
            <person name="Tanaka T."/>
            <person name="Ishii S."/>
            <person name="Yamamoto J."/>
            <person name="Saito K."/>
            <person name="Kawai Y."/>
            <person name="Isono Y."/>
            <person name="Nakamura Y."/>
            <person name="Nagahari K."/>
            <person name="Murakami K."/>
            <person name="Yasuda T."/>
            <person name="Iwayanagi T."/>
            <person name="Wagatsuma M."/>
            <person name="Shiratori A."/>
            <person name="Sudo H."/>
            <person name="Hosoiri T."/>
            <person name="Kaku Y."/>
            <person name="Kodaira H."/>
            <person name="Kondo H."/>
            <person name="Sugawara M."/>
            <person name="Takahashi M."/>
            <person name="Kanda K."/>
            <person name="Yokoi T."/>
            <person name="Furuya T."/>
            <person name="Kikkawa E."/>
            <person name="Omura Y."/>
            <person name="Abe K."/>
            <person name="Kamihara K."/>
            <person name="Katsuta N."/>
            <person name="Sato K."/>
            <person name="Tanikawa M."/>
            <person name="Yamazaki M."/>
            <person name="Ninomiya K."/>
            <person name="Ishibashi T."/>
            <person name="Yamashita H."/>
            <person name="Murakawa K."/>
            <person name="Fujimori K."/>
            <person name="Tanai H."/>
            <person name="Kimata M."/>
            <person name="Watanabe M."/>
            <person name="Hiraoka S."/>
            <person name="Chiba Y."/>
            <person name="Ishida S."/>
            <person name="Ono Y."/>
            <person name="Takiguchi S."/>
            <person name="Watanabe S."/>
            <person name="Yosida M."/>
            <person name="Hotuta T."/>
            <person name="Kusano J."/>
            <person name="Kanehori K."/>
            <person name="Takahashi-Fujii A."/>
            <person name="Hara H."/>
            <person name="Tanase T.-O."/>
            <person name="Nomura Y."/>
            <person name="Togiya S."/>
            <person name="Komai F."/>
            <person name="Hara R."/>
            <person name="Takeuchi K."/>
            <person name="Arita M."/>
            <person name="Imose N."/>
            <person name="Musashino K."/>
            <person name="Yuuki H."/>
            <person name="Oshima A."/>
            <person name="Sasaki N."/>
            <person name="Aotsuka S."/>
            <person name="Yoshikawa Y."/>
            <person name="Matsunawa H."/>
            <person name="Ichihara T."/>
            <person name="Shiohata N."/>
            <person name="Sano S."/>
            <person name="Moriya S."/>
            <person name="Momiyama H."/>
            <person name="Satoh N."/>
            <person name="Takami S."/>
            <person name="Terashima Y."/>
            <person name="Suzuki O."/>
            <person name="Nakagawa S."/>
            <person name="Senoh A."/>
            <person name="Mizoguchi H."/>
            <person name="Goto Y."/>
            <person name="Shimizu F."/>
            <person name="Wakebe H."/>
            <person name="Hishigaki H."/>
            <person name="Watanabe T."/>
            <person name="Sugiyama A."/>
            <person name="Takemoto M."/>
            <person name="Kawakami B."/>
            <person name="Yamazaki M."/>
            <person name="Watanabe K."/>
            <person name="Kumagai A."/>
            <person name="Itakura S."/>
            <person name="Fukuzumi Y."/>
            <person name="Fujimori Y."/>
            <person name="Komiyama M."/>
            <person name="Tashiro H."/>
            <person name="Tanigami A."/>
            <person name="Fujiwara T."/>
            <person name="Ono T."/>
            <person name="Yamada K."/>
            <person name="Fujii Y."/>
            <person name="Ozaki K."/>
            <person name="Hirao M."/>
            <person name="Ohmori Y."/>
            <person name="Kawabata A."/>
            <person name="Hikiji T."/>
            <person name="Kobatake N."/>
            <person name="Inagaki H."/>
            <person name="Ikema Y."/>
            <person name="Okamoto S."/>
            <person name="Okitani R."/>
            <person name="Kawakami T."/>
            <person name="Noguchi S."/>
            <person name="Itoh T."/>
            <person name="Shigeta K."/>
            <person name="Senba T."/>
            <person name="Matsumura K."/>
            <person name="Nakajima Y."/>
            <person name="Mizuno T."/>
            <person name="Morinaga M."/>
            <person name="Sasaki M."/>
            <person name="Togashi T."/>
            <person name="Oyama M."/>
            <person name="Hata H."/>
            <person name="Watanabe M."/>
            <person name="Komatsu T."/>
            <person name="Mizushima-Sugano J."/>
            <person name="Satoh T."/>
            <person name="Shirai Y."/>
            <person name="Takahashi Y."/>
            <person name="Nakagawa K."/>
            <person name="Okumura K."/>
            <person name="Nagase T."/>
            <person name="Nomura N."/>
            <person name="Kikuchi H."/>
            <person name="Masuho Y."/>
            <person name="Yamashita R."/>
            <person name="Nakai K."/>
            <person name="Yada T."/>
            <person name="Nakamura Y."/>
            <person name="Ohara O."/>
            <person name="Isogai T."/>
            <person name="Sugano S."/>
        </authorList>
    </citation>
    <scope>NUCLEOTIDE SEQUENCE [LARGE SCALE MRNA]</scope>
    <source>
        <tissue>Testis</tissue>
    </source>
</reference>
<reference key="3">
    <citation type="journal article" date="2006" name="Nature">
        <title>The DNA sequence and biological annotation of human chromosome 1.</title>
        <authorList>
            <person name="Gregory S.G."/>
            <person name="Barlow K.F."/>
            <person name="McLay K.E."/>
            <person name="Kaul R."/>
            <person name="Swarbreck D."/>
            <person name="Dunham A."/>
            <person name="Scott C.E."/>
            <person name="Howe K.L."/>
            <person name="Woodfine K."/>
            <person name="Spencer C.C.A."/>
            <person name="Jones M.C."/>
            <person name="Gillson C."/>
            <person name="Searle S."/>
            <person name="Zhou Y."/>
            <person name="Kokocinski F."/>
            <person name="McDonald L."/>
            <person name="Evans R."/>
            <person name="Phillips K."/>
            <person name="Atkinson A."/>
            <person name="Cooper R."/>
            <person name="Jones C."/>
            <person name="Hall R.E."/>
            <person name="Andrews T.D."/>
            <person name="Lloyd C."/>
            <person name="Ainscough R."/>
            <person name="Almeida J.P."/>
            <person name="Ambrose K.D."/>
            <person name="Anderson F."/>
            <person name="Andrew R.W."/>
            <person name="Ashwell R.I.S."/>
            <person name="Aubin K."/>
            <person name="Babbage A.K."/>
            <person name="Bagguley C.L."/>
            <person name="Bailey J."/>
            <person name="Beasley H."/>
            <person name="Bethel G."/>
            <person name="Bird C.P."/>
            <person name="Bray-Allen S."/>
            <person name="Brown J.Y."/>
            <person name="Brown A.J."/>
            <person name="Buckley D."/>
            <person name="Burton J."/>
            <person name="Bye J."/>
            <person name="Carder C."/>
            <person name="Chapman J.C."/>
            <person name="Clark S.Y."/>
            <person name="Clarke G."/>
            <person name="Clee C."/>
            <person name="Cobley V."/>
            <person name="Collier R.E."/>
            <person name="Corby N."/>
            <person name="Coville G.J."/>
            <person name="Davies J."/>
            <person name="Deadman R."/>
            <person name="Dunn M."/>
            <person name="Earthrowl M."/>
            <person name="Ellington A.G."/>
            <person name="Errington H."/>
            <person name="Frankish A."/>
            <person name="Frankland J."/>
            <person name="French L."/>
            <person name="Garner P."/>
            <person name="Garnett J."/>
            <person name="Gay L."/>
            <person name="Ghori M.R.J."/>
            <person name="Gibson R."/>
            <person name="Gilby L.M."/>
            <person name="Gillett W."/>
            <person name="Glithero R.J."/>
            <person name="Grafham D.V."/>
            <person name="Griffiths C."/>
            <person name="Griffiths-Jones S."/>
            <person name="Grocock R."/>
            <person name="Hammond S."/>
            <person name="Harrison E.S.I."/>
            <person name="Hart E."/>
            <person name="Haugen E."/>
            <person name="Heath P.D."/>
            <person name="Holmes S."/>
            <person name="Holt K."/>
            <person name="Howden P.J."/>
            <person name="Hunt A.R."/>
            <person name="Hunt S.E."/>
            <person name="Hunter G."/>
            <person name="Isherwood J."/>
            <person name="James R."/>
            <person name="Johnson C."/>
            <person name="Johnson D."/>
            <person name="Joy A."/>
            <person name="Kay M."/>
            <person name="Kershaw J.K."/>
            <person name="Kibukawa M."/>
            <person name="Kimberley A.M."/>
            <person name="King A."/>
            <person name="Knights A.J."/>
            <person name="Lad H."/>
            <person name="Laird G."/>
            <person name="Lawlor S."/>
            <person name="Leongamornlert D.A."/>
            <person name="Lloyd D.M."/>
            <person name="Loveland J."/>
            <person name="Lovell J."/>
            <person name="Lush M.J."/>
            <person name="Lyne R."/>
            <person name="Martin S."/>
            <person name="Mashreghi-Mohammadi M."/>
            <person name="Matthews L."/>
            <person name="Matthews N.S.W."/>
            <person name="McLaren S."/>
            <person name="Milne S."/>
            <person name="Mistry S."/>
            <person name="Moore M.J.F."/>
            <person name="Nickerson T."/>
            <person name="O'Dell C.N."/>
            <person name="Oliver K."/>
            <person name="Palmeiri A."/>
            <person name="Palmer S.A."/>
            <person name="Parker A."/>
            <person name="Patel D."/>
            <person name="Pearce A.V."/>
            <person name="Peck A.I."/>
            <person name="Pelan S."/>
            <person name="Phelps K."/>
            <person name="Phillimore B.J."/>
            <person name="Plumb R."/>
            <person name="Rajan J."/>
            <person name="Raymond C."/>
            <person name="Rouse G."/>
            <person name="Saenphimmachak C."/>
            <person name="Sehra H.K."/>
            <person name="Sheridan E."/>
            <person name="Shownkeen R."/>
            <person name="Sims S."/>
            <person name="Skuce C.D."/>
            <person name="Smith M."/>
            <person name="Steward C."/>
            <person name="Subramanian S."/>
            <person name="Sycamore N."/>
            <person name="Tracey A."/>
            <person name="Tromans A."/>
            <person name="Van Helmond Z."/>
            <person name="Wall M."/>
            <person name="Wallis J.M."/>
            <person name="White S."/>
            <person name="Whitehead S.L."/>
            <person name="Wilkinson J.E."/>
            <person name="Willey D.L."/>
            <person name="Williams H."/>
            <person name="Wilming L."/>
            <person name="Wray P.W."/>
            <person name="Wu Z."/>
            <person name="Coulson A."/>
            <person name="Vaudin M."/>
            <person name="Sulston J.E."/>
            <person name="Durbin R.M."/>
            <person name="Hubbard T."/>
            <person name="Wooster R."/>
            <person name="Dunham I."/>
            <person name="Carter N.P."/>
            <person name="McVean G."/>
            <person name="Ross M.T."/>
            <person name="Harrow J."/>
            <person name="Olson M.V."/>
            <person name="Beck S."/>
            <person name="Rogers J."/>
            <person name="Bentley D.R."/>
        </authorList>
    </citation>
    <scope>NUCLEOTIDE SEQUENCE [LARGE SCALE GENOMIC DNA]</scope>
</reference>
<reference key="4">
    <citation type="submission" date="2005-07" db="EMBL/GenBank/DDBJ databases">
        <authorList>
            <person name="Mural R.J."/>
            <person name="Istrail S."/>
            <person name="Sutton G.G."/>
            <person name="Florea L."/>
            <person name="Halpern A.L."/>
            <person name="Mobarry C.M."/>
            <person name="Lippert R."/>
            <person name="Walenz B."/>
            <person name="Shatkay H."/>
            <person name="Dew I."/>
            <person name="Miller J.R."/>
            <person name="Flanigan M.J."/>
            <person name="Edwards N.J."/>
            <person name="Bolanos R."/>
            <person name="Fasulo D."/>
            <person name="Halldorsson B.V."/>
            <person name="Hannenhalli S."/>
            <person name="Turner R."/>
            <person name="Yooseph S."/>
            <person name="Lu F."/>
            <person name="Nusskern D.R."/>
            <person name="Shue B.C."/>
            <person name="Zheng X.H."/>
            <person name="Zhong F."/>
            <person name="Delcher A.L."/>
            <person name="Huson D.H."/>
            <person name="Kravitz S.A."/>
            <person name="Mouchard L."/>
            <person name="Reinert K."/>
            <person name="Remington K.A."/>
            <person name="Clark A.G."/>
            <person name="Waterman M.S."/>
            <person name="Eichler E.E."/>
            <person name="Adams M.D."/>
            <person name="Hunkapiller M.W."/>
            <person name="Myers E.W."/>
            <person name="Venter J.C."/>
        </authorList>
    </citation>
    <scope>NUCLEOTIDE SEQUENCE [LARGE SCALE GENOMIC DNA]</scope>
</reference>
<reference key="5">
    <citation type="journal article" date="2004" name="Genome Res.">
        <title>The status, quality, and expansion of the NIH full-length cDNA project: the Mammalian Gene Collection (MGC).</title>
        <authorList>
            <consortium name="The MGC Project Team"/>
        </authorList>
    </citation>
    <scope>NUCLEOTIDE SEQUENCE [LARGE SCALE MRNA]</scope>
    <source>
        <tissue>Brain</tissue>
        <tissue>Lung</tissue>
    </source>
</reference>
<reference key="6">
    <citation type="journal article" date="1999" name="J. Invest. Dermatol.">
        <title>Dermatopontin expression is decreased in hypertrophic scar and systemic sclerosis skin fibroblasts and is regulated by transforming growth factor-beta1, interleukin-4, and matrix collagen.</title>
        <authorList>
            <person name="Kuroda K."/>
            <person name="Okamoto O."/>
            <person name="Shinkai H."/>
        </authorList>
    </citation>
    <scope>TISSUE SPECIFICITY</scope>
    <scope>INDUCTION</scope>
</reference>
<reference key="7">
    <citation type="journal article" date="2014" name="J. Proteomics">
        <title>An enzyme assisted RP-RPLC approach for in-depth analysis of human liver phosphoproteome.</title>
        <authorList>
            <person name="Bian Y."/>
            <person name="Song C."/>
            <person name="Cheng K."/>
            <person name="Dong M."/>
            <person name="Wang F."/>
            <person name="Huang J."/>
            <person name="Sun D."/>
            <person name="Wang L."/>
            <person name="Ye M."/>
            <person name="Zou H."/>
        </authorList>
    </citation>
    <scope>IDENTIFICATION BY MASS SPECTROMETRY [LARGE SCALE ANALYSIS]</scope>
    <source>
        <tissue>Liver</tissue>
    </source>
</reference>
<feature type="signal peptide" evidence="1">
    <location>
        <begin position="1"/>
        <end position="18"/>
    </location>
</feature>
<feature type="chain" id="PRO_0000007368" description="Dermatopontin">
    <location>
        <begin position="19"/>
        <end position="201"/>
    </location>
</feature>
<feature type="repeat" description="1-1">
    <location>
        <begin position="26"/>
        <end position="79"/>
    </location>
</feature>
<feature type="repeat" description="2-1">
    <location>
        <begin position="70"/>
        <end position="75"/>
    </location>
</feature>
<feature type="repeat" description="1-2">
    <location>
        <begin position="80"/>
        <end position="135"/>
    </location>
</feature>
<feature type="repeat" description="2-2">
    <location>
        <begin position="125"/>
        <end position="130"/>
    </location>
</feature>
<feature type="repeat" description="3-3">
    <location>
        <begin position="181"/>
        <end position="186"/>
    </location>
</feature>
<feature type="region of interest" description="2 X 53-55 AA tandem repeats">
    <location>
        <begin position="26"/>
        <end position="186"/>
    </location>
</feature>
<feature type="region of interest" description="3 X 6 AA repeats of D-R-[EQ]-W-[NQK]-[FY]">
    <location>
        <begin position="70"/>
        <end position="186"/>
    </location>
</feature>
<feature type="modified residue" description="Pyrrolidone carboxylic acid" evidence="2">
    <location>
        <position position="19"/>
    </location>
</feature>
<feature type="modified residue" description="Sulfotyrosine" evidence="3">
    <location>
        <position position="23"/>
    </location>
</feature>
<feature type="modified residue" description="Sulfotyrosine" evidence="3">
    <location>
        <position position="162"/>
    </location>
</feature>
<feature type="modified residue" description="Sulfotyrosine" evidence="3">
    <location>
        <position position="164"/>
    </location>
</feature>
<feature type="modified residue" description="Sulfotyrosine" evidence="3">
    <location>
        <position position="166"/>
    </location>
</feature>
<feature type="modified residue" description="Sulfotyrosine" evidence="3">
    <location>
        <position position="167"/>
    </location>
</feature>
<feature type="modified residue" description="Sulfotyrosine" evidence="3">
    <location>
        <position position="194"/>
    </location>
</feature>
<feature type="disulfide bond" evidence="1">
    <location>
        <begin position="50"/>
        <end position="77"/>
    </location>
</feature>
<feature type="disulfide bond" description="Or C-90 with C-133" evidence="1">
    <location>
        <begin position="90"/>
        <end position="132"/>
    </location>
</feature>
<feature type="disulfide bond" description="Or C-106 with C-132" evidence="1">
    <location>
        <begin position="106"/>
        <end position="133"/>
    </location>
</feature>
<feature type="disulfide bond" evidence="1">
    <location>
        <begin position="139"/>
        <end position="196"/>
    </location>
</feature>
<feature type="disulfide bond" evidence="3">
    <location>
        <begin position="143"/>
        <end position="189"/>
    </location>
</feature>
<feature type="sequence variant" id="VAR_048888" description="In dbSNP:rs6698023.">
    <original>V</original>
    <variation>I</variation>
    <location>
        <position position="201"/>
    </location>
</feature>
<feature type="sequence conflict" description="In Ref. 1; CAA80487." evidence="6" ref="1">
    <original>L</original>
    <variation>M</variation>
    <location>
        <position position="10"/>
    </location>
</feature>
<feature type="sequence conflict" description="In Ref. 5; AAH33736." evidence="6" ref="5">
    <original>T</original>
    <variation>I</variation>
    <location>
        <position position="147"/>
    </location>
</feature>
<organism>
    <name type="scientific">Homo sapiens</name>
    <name type="common">Human</name>
    <dbReference type="NCBI Taxonomy" id="9606"/>
    <lineage>
        <taxon>Eukaryota</taxon>
        <taxon>Metazoa</taxon>
        <taxon>Chordata</taxon>
        <taxon>Craniata</taxon>
        <taxon>Vertebrata</taxon>
        <taxon>Euteleostomi</taxon>
        <taxon>Mammalia</taxon>
        <taxon>Eutheria</taxon>
        <taxon>Euarchontoglires</taxon>
        <taxon>Primates</taxon>
        <taxon>Haplorrhini</taxon>
        <taxon>Catarrhini</taxon>
        <taxon>Hominidae</taxon>
        <taxon>Homo</taxon>
    </lineage>
</organism>
<sequence>MDLSLLWVLLPLVTMAWGQYGDYGYPYQQYHDYSDDGWVNLNRQGFSYQCPQGQVIVAVRSIFSKKEGSDRQWNYACMPTPQSLGEPTECWWEEINRAGMEWYQTCSNNGLVAGFQSRYFESVLDREWQFYCCRYSKRCPYSCWLTTEYPGHYGEEMDMISYNYDYYIRGATTTFSAVERDRQWKFIMCRMTEYDCEFANV</sequence>
<evidence type="ECO:0000250" key="1"/>
<evidence type="ECO:0000250" key="2">
    <source>
        <dbReference type="UniProtKB" id="P19427"/>
    </source>
</evidence>
<evidence type="ECO:0000255" key="3"/>
<evidence type="ECO:0000269" key="4">
    <source>
    </source>
</evidence>
<evidence type="ECO:0000269" key="5">
    <source>
    </source>
</evidence>
<evidence type="ECO:0000305" key="6"/>
<accession>Q07507</accession>
<accession>A8K981</accession>
<accession>Q8N4R2</accession>
<accession>Q9UIX8</accession>
<protein>
    <recommendedName>
        <fullName>Dermatopontin</fullName>
    </recommendedName>
    <alternativeName>
        <fullName>Tyrosine-rich acidic matrix protein</fullName>
        <shortName>TRAMP</shortName>
    </alternativeName>
</protein>
<name>DERM_HUMAN</name>
<proteinExistence type="evidence at protein level"/>